<gene>
    <name type="ordered locus">RBAM_014860</name>
</gene>
<name>Y1486_BACVZ</name>
<proteinExistence type="inferred from homology"/>
<dbReference type="EMBL" id="CP000560">
    <property type="protein sequence ID" value="ABS73849.1"/>
    <property type="molecule type" value="Genomic_DNA"/>
</dbReference>
<dbReference type="RefSeq" id="WP_003154470.1">
    <property type="nucleotide sequence ID" value="NC_009725.2"/>
</dbReference>
<dbReference type="SMR" id="A7Z4C3"/>
<dbReference type="GeneID" id="93080619"/>
<dbReference type="KEGG" id="bay:RBAM_014860"/>
<dbReference type="HOGENOM" id="CLU_159890_2_0_9"/>
<dbReference type="Proteomes" id="UP000001120">
    <property type="component" value="Chromosome"/>
</dbReference>
<dbReference type="GO" id="GO:0005737">
    <property type="term" value="C:cytoplasm"/>
    <property type="evidence" value="ECO:0007669"/>
    <property type="project" value="UniProtKB-SubCell"/>
</dbReference>
<dbReference type="HAMAP" id="MF_01126">
    <property type="entry name" value="UPF0298"/>
    <property type="match status" value="1"/>
</dbReference>
<dbReference type="InterPro" id="IPR016979">
    <property type="entry name" value="DUF2129"/>
</dbReference>
<dbReference type="NCBIfam" id="NF002777">
    <property type="entry name" value="PRK02886.1"/>
    <property type="match status" value="1"/>
</dbReference>
<dbReference type="Pfam" id="PF09902">
    <property type="entry name" value="DUF2129"/>
    <property type="match status" value="1"/>
</dbReference>
<dbReference type="PIRSF" id="PIRSF031653">
    <property type="entry name" value="UCP031653"/>
    <property type="match status" value="1"/>
</dbReference>
<reference key="1">
    <citation type="journal article" date="2007" name="Nat. Biotechnol.">
        <title>Comparative analysis of the complete genome sequence of the plant growth-promoting bacterium Bacillus amyloliquefaciens FZB42.</title>
        <authorList>
            <person name="Chen X.H."/>
            <person name="Koumoutsi A."/>
            <person name="Scholz R."/>
            <person name="Eisenreich A."/>
            <person name="Schneider K."/>
            <person name="Heinemeyer I."/>
            <person name="Morgenstern B."/>
            <person name="Voss B."/>
            <person name="Hess W.R."/>
            <person name="Reva O."/>
            <person name="Junge H."/>
            <person name="Voigt B."/>
            <person name="Jungblut P.R."/>
            <person name="Vater J."/>
            <person name="Suessmuth R."/>
            <person name="Liesegang H."/>
            <person name="Strittmatter A."/>
            <person name="Gottschalk G."/>
            <person name="Borriss R."/>
        </authorList>
    </citation>
    <scope>NUCLEOTIDE SEQUENCE [LARGE SCALE GENOMIC DNA]</scope>
    <source>
        <strain>DSM 23117 / BGSC 10A6 / LMG 26770 / FZB42</strain>
    </source>
</reference>
<accession>A7Z4C3</accession>
<keyword id="KW-0963">Cytoplasm</keyword>
<comment type="subcellular location">
    <subcellularLocation>
        <location evidence="1">Cytoplasm</location>
    </subcellularLocation>
</comment>
<comment type="similarity">
    <text evidence="1">Belongs to the UPF0298 family.</text>
</comment>
<protein>
    <recommendedName>
        <fullName evidence="1">UPF0298 protein RBAM_014860</fullName>
    </recommendedName>
</protein>
<evidence type="ECO:0000255" key="1">
    <source>
        <dbReference type="HAMAP-Rule" id="MF_01126"/>
    </source>
</evidence>
<sequence length="90" mass="10819">MENKRQGIIVYLHSLKHSKMLRKFGNVHYVSKRLKYVVLYCDMDLIEKTMEKISSYSYVKKVEPSYKPFLKLEFESKLDKAKEYDYKVGI</sequence>
<feature type="chain" id="PRO_1000085013" description="UPF0298 protein RBAM_014860">
    <location>
        <begin position="1"/>
        <end position="90"/>
    </location>
</feature>
<organism>
    <name type="scientific">Bacillus velezensis (strain DSM 23117 / BGSC 10A6 / LMG 26770 / FZB42)</name>
    <name type="common">Bacillus amyloliquefaciens subsp. plantarum</name>
    <dbReference type="NCBI Taxonomy" id="326423"/>
    <lineage>
        <taxon>Bacteria</taxon>
        <taxon>Bacillati</taxon>
        <taxon>Bacillota</taxon>
        <taxon>Bacilli</taxon>
        <taxon>Bacillales</taxon>
        <taxon>Bacillaceae</taxon>
        <taxon>Bacillus</taxon>
        <taxon>Bacillus amyloliquefaciens group</taxon>
    </lineage>
</organism>